<name>PPR74_ARATH</name>
<gene>
    <name evidence="6" type="primary">DYW1</name>
    <name type="synonym">PCMP-H50</name>
    <name type="ordered locus">At1g47580</name>
    <name type="ORF">F16N3.14</name>
</gene>
<sequence>MALEAAFSMSFCSFSVPKAIFCERETSSFQRITSRAKGIAGESQVQSSDGVETQVKETSPKVFDKLPERNLDTWSGGRETARGLSGSVVRNTVRKDTTLRHISPSSHSTKVRGDKPEISGGEKKAIVDRSKAYVKLKSLGKEVRDAGYVPETKYVLHDIDEEAKEKALMHHSERLAIAFGIINTPPGTTIRVMKNLRICGDCHNFIKILSSIEDREIIVRDNKRFHHFRDGNCSCGDYW</sequence>
<accession>P0C7R1</accession>
<accession>Q9SX89</accession>
<dbReference type="EMBL" id="AC007519">
    <property type="protein sequence ID" value="AAD46029.1"/>
    <property type="status" value="ALT_SEQ"/>
    <property type="molecule type" value="Genomic_DNA"/>
</dbReference>
<dbReference type="EMBL" id="CP002684">
    <property type="protein sequence ID" value="AEE32190.1"/>
    <property type="molecule type" value="Genomic_DNA"/>
</dbReference>
<dbReference type="EMBL" id="BX818700">
    <property type="status" value="NOT_ANNOTATED_CDS"/>
    <property type="molecule type" value="mRNA"/>
</dbReference>
<dbReference type="PIR" id="D96516">
    <property type="entry name" value="D96516"/>
</dbReference>
<dbReference type="RefSeq" id="NP_175189.2">
    <property type="nucleotide sequence ID" value="NM_103651.4"/>
</dbReference>
<dbReference type="PDB" id="7W86">
    <property type="method" value="X-ray"/>
    <property type="resolution" value="1.80 A"/>
    <property type="chains" value="A=123-239"/>
</dbReference>
<dbReference type="PDBsum" id="7W86"/>
<dbReference type="SMR" id="P0C7R1"/>
<dbReference type="BioGRID" id="26392">
    <property type="interactions" value="1"/>
</dbReference>
<dbReference type="FunCoup" id="P0C7R1">
    <property type="interactions" value="246"/>
</dbReference>
<dbReference type="STRING" id="3702.P0C7R1"/>
<dbReference type="PaxDb" id="3702-AT1G47580.1"/>
<dbReference type="ProteomicsDB" id="226401"/>
<dbReference type="EnsemblPlants" id="AT1G47580.1">
    <property type="protein sequence ID" value="AT1G47580.1"/>
    <property type="gene ID" value="AT1G47580"/>
</dbReference>
<dbReference type="GeneID" id="841167"/>
<dbReference type="Gramene" id="AT1G47580.1">
    <property type="protein sequence ID" value="AT1G47580.1"/>
    <property type="gene ID" value="AT1G47580"/>
</dbReference>
<dbReference type="KEGG" id="ath:AT1G47580"/>
<dbReference type="Araport" id="AT1G47580"/>
<dbReference type="TAIR" id="AT1G47580">
    <property type="gene designation" value="DYW1"/>
</dbReference>
<dbReference type="eggNOG" id="KOG0325">
    <property type="taxonomic scope" value="Eukaryota"/>
</dbReference>
<dbReference type="eggNOG" id="KOG4197">
    <property type="taxonomic scope" value="Eukaryota"/>
</dbReference>
<dbReference type="HOGENOM" id="CLU_1311692_0_0_1"/>
<dbReference type="InParanoid" id="P0C7R1"/>
<dbReference type="OMA" id="IFCERET"/>
<dbReference type="OrthoDB" id="185373at2759"/>
<dbReference type="PhylomeDB" id="P0C7R1"/>
<dbReference type="PRO" id="PR:P0C7R1"/>
<dbReference type="Proteomes" id="UP000006548">
    <property type="component" value="Chromosome 1"/>
</dbReference>
<dbReference type="ExpressionAtlas" id="P0C7R1">
    <property type="expression patterns" value="baseline and differential"/>
</dbReference>
<dbReference type="GO" id="GO:0009507">
    <property type="term" value="C:chloroplast"/>
    <property type="evidence" value="ECO:0000314"/>
    <property type="project" value="UniProtKB"/>
</dbReference>
<dbReference type="GO" id="GO:0009536">
    <property type="term" value="C:plastid"/>
    <property type="evidence" value="ECO:0000314"/>
    <property type="project" value="TAIR"/>
</dbReference>
<dbReference type="GO" id="GO:0008270">
    <property type="term" value="F:zinc ion binding"/>
    <property type="evidence" value="ECO:0000314"/>
    <property type="project" value="UniProtKB"/>
</dbReference>
<dbReference type="GO" id="GO:1900871">
    <property type="term" value="P:chloroplast mRNA modification"/>
    <property type="evidence" value="ECO:0000315"/>
    <property type="project" value="TAIR"/>
</dbReference>
<dbReference type="GO" id="GO:1900865">
    <property type="term" value="P:chloroplast RNA modification"/>
    <property type="evidence" value="ECO:0000315"/>
    <property type="project" value="UniProtKB"/>
</dbReference>
<dbReference type="GO" id="GO:0006397">
    <property type="term" value="P:mRNA processing"/>
    <property type="evidence" value="ECO:0007669"/>
    <property type="project" value="UniProtKB-KW"/>
</dbReference>
<dbReference type="InterPro" id="IPR032867">
    <property type="entry name" value="DYW_dom"/>
</dbReference>
<dbReference type="Pfam" id="PF14432">
    <property type="entry name" value="DYW_deaminase"/>
    <property type="match status" value="1"/>
</dbReference>
<proteinExistence type="evidence at protein level"/>
<reference key="1">
    <citation type="journal article" date="2000" name="Nature">
        <title>Sequence and analysis of chromosome 1 of the plant Arabidopsis thaliana.</title>
        <authorList>
            <person name="Theologis A."/>
            <person name="Ecker J.R."/>
            <person name="Palm C.J."/>
            <person name="Federspiel N.A."/>
            <person name="Kaul S."/>
            <person name="White O."/>
            <person name="Alonso J."/>
            <person name="Altafi H."/>
            <person name="Araujo R."/>
            <person name="Bowman C.L."/>
            <person name="Brooks S.Y."/>
            <person name="Buehler E."/>
            <person name="Chan A."/>
            <person name="Chao Q."/>
            <person name="Chen H."/>
            <person name="Cheuk R.F."/>
            <person name="Chin C.W."/>
            <person name="Chung M.K."/>
            <person name="Conn L."/>
            <person name="Conway A.B."/>
            <person name="Conway A.R."/>
            <person name="Creasy T.H."/>
            <person name="Dewar K."/>
            <person name="Dunn P."/>
            <person name="Etgu P."/>
            <person name="Feldblyum T.V."/>
            <person name="Feng J.-D."/>
            <person name="Fong B."/>
            <person name="Fujii C.Y."/>
            <person name="Gill J.E."/>
            <person name="Goldsmith A.D."/>
            <person name="Haas B."/>
            <person name="Hansen N.F."/>
            <person name="Hughes B."/>
            <person name="Huizar L."/>
            <person name="Hunter J.L."/>
            <person name="Jenkins J."/>
            <person name="Johnson-Hopson C."/>
            <person name="Khan S."/>
            <person name="Khaykin E."/>
            <person name="Kim C.J."/>
            <person name="Koo H.L."/>
            <person name="Kremenetskaia I."/>
            <person name="Kurtz D.B."/>
            <person name="Kwan A."/>
            <person name="Lam B."/>
            <person name="Langin-Hooper S."/>
            <person name="Lee A."/>
            <person name="Lee J.M."/>
            <person name="Lenz C.A."/>
            <person name="Li J.H."/>
            <person name="Li Y.-P."/>
            <person name="Lin X."/>
            <person name="Liu S.X."/>
            <person name="Liu Z.A."/>
            <person name="Luros J.S."/>
            <person name="Maiti R."/>
            <person name="Marziali A."/>
            <person name="Militscher J."/>
            <person name="Miranda M."/>
            <person name="Nguyen M."/>
            <person name="Nierman W.C."/>
            <person name="Osborne B.I."/>
            <person name="Pai G."/>
            <person name="Peterson J."/>
            <person name="Pham P.K."/>
            <person name="Rizzo M."/>
            <person name="Rooney T."/>
            <person name="Rowley D."/>
            <person name="Sakano H."/>
            <person name="Salzberg S.L."/>
            <person name="Schwartz J.R."/>
            <person name="Shinn P."/>
            <person name="Southwick A.M."/>
            <person name="Sun H."/>
            <person name="Tallon L.J."/>
            <person name="Tambunga G."/>
            <person name="Toriumi M.J."/>
            <person name="Town C.D."/>
            <person name="Utterback T."/>
            <person name="Van Aken S."/>
            <person name="Vaysberg M."/>
            <person name="Vysotskaia V.S."/>
            <person name="Walker M."/>
            <person name="Wu D."/>
            <person name="Yu G."/>
            <person name="Fraser C.M."/>
            <person name="Venter J.C."/>
            <person name="Davis R.W."/>
        </authorList>
    </citation>
    <scope>NUCLEOTIDE SEQUENCE [LARGE SCALE GENOMIC DNA]</scope>
    <source>
        <strain>cv. Columbia</strain>
    </source>
</reference>
<reference key="2">
    <citation type="journal article" date="2017" name="Plant J.">
        <title>Araport11: a complete reannotation of the Arabidopsis thaliana reference genome.</title>
        <authorList>
            <person name="Cheng C.Y."/>
            <person name="Krishnakumar V."/>
            <person name="Chan A.P."/>
            <person name="Thibaud-Nissen F."/>
            <person name="Schobel S."/>
            <person name="Town C.D."/>
        </authorList>
    </citation>
    <scope>GENOME REANNOTATION</scope>
    <source>
        <strain>cv. Columbia</strain>
    </source>
</reference>
<reference key="3">
    <citation type="journal article" date="2004" name="Genome Res.">
        <title>Whole genome sequence comparisons and 'full-length' cDNA sequences: a combined approach to evaluate and improve Arabidopsis genome annotation.</title>
        <authorList>
            <person name="Castelli V."/>
            <person name="Aury J.-M."/>
            <person name="Jaillon O."/>
            <person name="Wincker P."/>
            <person name="Clepet C."/>
            <person name="Menard M."/>
            <person name="Cruaud C."/>
            <person name="Quetier F."/>
            <person name="Scarpelli C."/>
            <person name="Schaechter V."/>
            <person name="Temple G."/>
            <person name="Caboche M."/>
            <person name="Weissenbach J."/>
            <person name="Salanoubat M."/>
        </authorList>
    </citation>
    <scope>NUCLEOTIDE SEQUENCE [LARGE SCALE MRNA] OF 3-239</scope>
    <source>
        <strain>cv. Columbia</strain>
    </source>
</reference>
<reference key="4">
    <citation type="journal article" date="2000" name="Plant Mol. Biol.">
        <title>In Arabidopsis thaliana, 1% of the genome codes for a novel protein family unique to plants.</title>
        <authorList>
            <person name="Aubourg S."/>
            <person name="Boudet N."/>
            <person name="Kreis M."/>
            <person name="Lecharny A."/>
        </authorList>
    </citation>
    <scope>GENE FAMILY</scope>
</reference>
<reference key="5">
    <citation type="journal article" date="2004" name="Plant Cell">
        <title>Genome-wide analysis of Arabidopsis pentatricopeptide repeat proteins reveals their essential role in organelle biogenesis.</title>
        <authorList>
            <person name="Lurin C."/>
            <person name="Andres C."/>
            <person name="Aubourg S."/>
            <person name="Bellaoui M."/>
            <person name="Bitton F."/>
            <person name="Bruyere C."/>
            <person name="Caboche M."/>
            <person name="Debast C."/>
            <person name="Gualberto J."/>
            <person name="Hoffmann B."/>
            <person name="Lecharny A."/>
            <person name="Le Ret M."/>
            <person name="Martin-Magniette M.-L."/>
            <person name="Mireau H."/>
            <person name="Peeters N."/>
            <person name="Renou J.-P."/>
            <person name="Szurek B."/>
            <person name="Taconnat L."/>
            <person name="Small I."/>
        </authorList>
    </citation>
    <scope>GENE FAMILY</scope>
</reference>
<reference key="6">
    <citation type="journal article" date="2012" name="Plant Cell">
        <title>Two interacting proteins are necessary for the editing of the NdhD-1 site in Arabidopsis plastids.</title>
        <authorList>
            <person name="Boussardon C."/>
            <person name="Salone V."/>
            <person name="Avon A."/>
            <person name="Berthome R."/>
            <person name="Hammani K."/>
            <person name="Okuda K."/>
            <person name="Shikanai T."/>
            <person name="Small I."/>
            <person name="Lurin C."/>
        </authorList>
    </citation>
    <scope>FUNCTION</scope>
    <scope>SUBCELLULAR LOCATION</scope>
    <scope>INTERACTION WITH CRR4</scope>
    <scope>DISRUPTION PHENOTYPE</scope>
</reference>
<reference key="7">
    <citation type="journal article" date="2013" name="J. Biol. Chem.">
        <title>Identification of two pentatricopeptide repeat genes required for RNA editing and zinc binding by C-terminal cytidine deaminase-like domains.</title>
        <authorList>
            <person name="Hayes M.L."/>
            <person name="Giang K."/>
            <person name="Berhane B."/>
            <person name="Mulligan R.M."/>
        </authorList>
    </citation>
    <scope>COFACTOR</scope>
</reference>
<reference key="8">
    <citation type="journal article" date="2014" name="New Phytol.">
        <title>The cytidine deaminase signature HxE(x)n CxxC of DYW1 binds zinc and is necessary for RNA editing of ndhD-1.</title>
        <authorList>
            <person name="Boussardon C."/>
            <person name="Avon A."/>
            <person name="Kindgren P."/>
            <person name="Bond C.S."/>
            <person name="Challenor M."/>
            <person name="Lurin C."/>
            <person name="Small I."/>
        </authorList>
    </citation>
    <scope>COFACTOR</scope>
</reference>
<evidence type="ECO:0000255" key="1"/>
<evidence type="ECO:0000256" key="2">
    <source>
        <dbReference type="SAM" id="MobiDB-lite"/>
    </source>
</evidence>
<evidence type="ECO:0000269" key="3">
    <source>
    </source>
</evidence>
<evidence type="ECO:0000269" key="4">
    <source>
    </source>
</evidence>
<evidence type="ECO:0000269" key="5">
    <source>
    </source>
</evidence>
<evidence type="ECO:0000303" key="6">
    <source>
    </source>
</evidence>
<evidence type="ECO:0000305" key="7"/>
<evidence type="ECO:0000305" key="8">
    <source>
    </source>
</evidence>
<evidence type="ECO:0007829" key="9">
    <source>
        <dbReference type="PDB" id="7W86"/>
    </source>
</evidence>
<feature type="transit peptide" description="Chloroplast" evidence="1">
    <location>
        <begin position="1"/>
        <end position="35"/>
    </location>
</feature>
<feature type="chain" id="PRO_0000342815" description="Pentatricopeptide repeat-containing protein DWY1, chloroplastic">
    <location>
        <begin position="36"/>
        <end position="239"/>
    </location>
</feature>
<feature type="region of interest" description="Disordered" evidence="2">
    <location>
        <begin position="40"/>
        <end position="59"/>
    </location>
</feature>
<feature type="region of interest" description="Disordered" evidence="2">
    <location>
        <begin position="101"/>
        <end position="122"/>
    </location>
</feature>
<feature type="region of interest" description="Type E(+) motif" evidence="8">
    <location>
        <begin position="113"/>
        <end position="144"/>
    </location>
</feature>
<feature type="region of interest" description="Type DYW motif" evidence="8">
    <location>
        <begin position="145"/>
        <end position="239"/>
    </location>
</feature>
<feature type="compositionally biased region" description="Basic and acidic residues" evidence="2">
    <location>
        <begin position="111"/>
        <end position="122"/>
    </location>
</feature>
<feature type="helix" evidence="9">
    <location>
        <begin position="124"/>
        <end position="145"/>
    </location>
</feature>
<feature type="helix" evidence="9">
    <location>
        <begin position="152"/>
        <end position="154"/>
    </location>
</feature>
<feature type="helix" evidence="9">
    <location>
        <begin position="161"/>
        <end position="169"/>
    </location>
</feature>
<feature type="helix" evidence="9">
    <location>
        <begin position="172"/>
        <end position="183"/>
    </location>
</feature>
<feature type="strand" evidence="9">
    <location>
        <begin position="190"/>
        <end position="193"/>
    </location>
</feature>
<feature type="helix" evidence="9">
    <location>
        <begin position="200"/>
        <end position="212"/>
    </location>
</feature>
<feature type="strand" evidence="9">
    <location>
        <begin position="213"/>
        <end position="215"/>
    </location>
</feature>
<feature type="strand" evidence="9">
    <location>
        <begin position="217"/>
        <end position="220"/>
    </location>
</feature>
<feature type="strand" evidence="9">
    <location>
        <begin position="225"/>
        <end position="229"/>
    </location>
</feature>
<feature type="turn" evidence="9">
    <location>
        <begin position="234"/>
        <end position="237"/>
    </location>
</feature>
<protein>
    <recommendedName>
        <fullName>Pentatricopeptide repeat-containing protein DWY1, chloroplastic</fullName>
    </recommendedName>
    <alternativeName>
        <fullName evidence="6">DYW-domain protein 1</fullName>
    </alternativeName>
</protein>
<comment type="function">
    <text evidence="3">Plays a major role in single RNA editing events in chloroplasts. Acts as a site-recognition transacting factor involved in the edition of the site 1 of ndhD (ndhD-1 site corresponding to cytidine-2), which is a plastid-encoded subunit of the NADH-plastoquinone oxidoreductase. The interaction with CRR4 is required for its function in editing the ndhD-1 site.</text>
</comment>
<comment type="cofactor">
    <cofactor evidence="4 5">
        <name>Zn(2+)</name>
        <dbReference type="ChEBI" id="CHEBI:29105"/>
    </cofactor>
    <text evidence="4">Binds 2 zinc ions per subunit.</text>
</comment>
<comment type="subunit">
    <text evidence="3">Interacts with CRR4.</text>
</comment>
<comment type="subcellular location">
    <subcellularLocation>
        <location evidence="3">Plastid</location>
        <location evidence="3">Chloroplast</location>
    </subcellularLocation>
</comment>
<comment type="disruption phenotype">
    <text evidence="3">No visible phenotype under normal growth conditions, but the mutant plants lack editing of the ndhD-1 site.</text>
</comment>
<comment type="miscellaneous">
    <text evidence="8">Unlike other RNA editing factors, DYW1 does not contain identifiable PPR repeats but does contain E(+) and DYW motifs. Therefore its association with CCR4, which lacks E(+) and DYW motifs, but does contain PPR repeats, is required for its function in RNA editing.</text>
</comment>
<comment type="similarity">
    <text evidence="7">Belongs to the PPR family. PCMP-H subfamily.</text>
</comment>
<comment type="sequence caution" evidence="7">
    <conflict type="erroneous gene model prediction">
        <sequence resource="EMBL-CDS" id="AAD46029"/>
    </conflict>
    <text>The predicted gene has been split into 2 genes: At1g47578 and At1g47580.</text>
</comment>
<comment type="online information" name="Pentatricopeptide repeat proteins">
    <link uri="https://ppr.plantenergy.uwa.edu.au"/>
</comment>
<keyword id="KW-0002">3D-structure</keyword>
<keyword id="KW-0150">Chloroplast</keyword>
<keyword id="KW-0479">Metal-binding</keyword>
<keyword id="KW-0507">mRNA processing</keyword>
<keyword id="KW-0934">Plastid</keyword>
<keyword id="KW-1185">Reference proteome</keyword>
<keyword id="KW-0691">RNA editing</keyword>
<keyword id="KW-0809">Transit peptide</keyword>
<keyword id="KW-0862">Zinc</keyword>
<organism>
    <name type="scientific">Arabidopsis thaliana</name>
    <name type="common">Mouse-ear cress</name>
    <dbReference type="NCBI Taxonomy" id="3702"/>
    <lineage>
        <taxon>Eukaryota</taxon>
        <taxon>Viridiplantae</taxon>
        <taxon>Streptophyta</taxon>
        <taxon>Embryophyta</taxon>
        <taxon>Tracheophyta</taxon>
        <taxon>Spermatophyta</taxon>
        <taxon>Magnoliopsida</taxon>
        <taxon>eudicotyledons</taxon>
        <taxon>Gunneridae</taxon>
        <taxon>Pentapetalae</taxon>
        <taxon>rosids</taxon>
        <taxon>malvids</taxon>
        <taxon>Brassicales</taxon>
        <taxon>Brassicaceae</taxon>
        <taxon>Camelineae</taxon>
        <taxon>Arabidopsis</taxon>
    </lineage>
</organism>